<reference key="1">
    <citation type="submission" date="2007-08" db="EMBL/GenBank/DDBJ databases">
        <authorList>
            <consortium name="The Citrobacter koseri Genome Sequencing Project"/>
            <person name="McClelland M."/>
            <person name="Sanderson E.K."/>
            <person name="Porwollik S."/>
            <person name="Spieth J."/>
            <person name="Clifton W.S."/>
            <person name="Latreille P."/>
            <person name="Courtney L."/>
            <person name="Wang C."/>
            <person name="Pepin K."/>
            <person name="Bhonagiri V."/>
            <person name="Nash W."/>
            <person name="Johnson M."/>
            <person name="Thiruvilangam P."/>
            <person name="Wilson R."/>
        </authorList>
    </citation>
    <scope>NUCLEOTIDE SEQUENCE [LARGE SCALE GENOMIC DNA]</scope>
    <source>
        <strain>ATCC BAA-895 / CDC 4225-83 / SGSC4696</strain>
    </source>
</reference>
<keyword id="KW-0963">Cytoplasm</keyword>
<keyword id="KW-0489">Methyltransferase</keyword>
<keyword id="KW-1185">Reference proteome</keyword>
<keyword id="KW-0949">S-adenosyl-L-methionine</keyword>
<keyword id="KW-0808">Transferase</keyword>
<accession>A8AQF7</accession>
<protein>
    <recommendedName>
        <fullName evidence="1">Ribosomal protein L11 methyltransferase</fullName>
        <shortName evidence="1">L11 Mtase</shortName>
        <ecNumber evidence="1">2.1.1.-</ecNumber>
    </recommendedName>
</protein>
<evidence type="ECO:0000255" key="1">
    <source>
        <dbReference type="HAMAP-Rule" id="MF_00735"/>
    </source>
</evidence>
<feature type="chain" id="PRO_1000046008" description="Ribosomal protein L11 methyltransferase">
    <location>
        <begin position="1"/>
        <end position="293"/>
    </location>
</feature>
<feature type="binding site" evidence="1">
    <location>
        <position position="145"/>
    </location>
    <ligand>
        <name>S-adenosyl-L-methionine</name>
        <dbReference type="ChEBI" id="CHEBI:59789"/>
    </ligand>
</feature>
<feature type="binding site" evidence="1">
    <location>
        <position position="166"/>
    </location>
    <ligand>
        <name>S-adenosyl-L-methionine</name>
        <dbReference type="ChEBI" id="CHEBI:59789"/>
    </ligand>
</feature>
<feature type="binding site" evidence="1">
    <location>
        <position position="188"/>
    </location>
    <ligand>
        <name>S-adenosyl-L-methionine</name>
        <dbReference type="ChEBI" id="CHEBI:59789"/>
    </ligand>
</feature>
<feature type="binding site" evidence="1">
    <location>
        <position position="230"/>
    </location>
    <ligand>
        <name>S-adenosyl-L-methionine</name>
        <dbReference type="ChEBI" id="CHEBI:59789"/>
    </ligand>
</feature>
<organism>
    <name type="scientific">Citrobacter koseri (strain ATCC BAA-895 / CDC 4225-83 / SGSC4696)</name>
    <dbReference type="NCBI Taxonomy" id="290338"/>
    <lineage>
        <taxon>Bacteria</taxon>
        <taxon>Pseudomonadati</taxon>
        <taxon>Pseudomonadota</taxon>
        <taxon>Gammaproteobacteria</taxon>
        <taxon>Enterobacterales</taxon>
        <taxon>Enterobacteriaceae</taxon>
        <taxon>Citrobacter</taxon>
    </lineage>
</organism>
<comment type="function">
    <text evidence="1">Methylates ribosomal protein L11.</text>
</comment>
<comment type="catalytic activity">
    <reaction evidence="1">
        <text>L-lysyl-[protein] + 3 S-adenosyl-L-methionine = N(6),N(6),N(6)-trimethyl-L-lysyl-[protein] + 3 S-adenosyl-L-homocysteine + 3 H(+)</text>
        <dbReference type="Rhea" id="RHEA:54192"/>
        <dbReference type="Rhea" id="RHEA-COMP:9752"/>
        <dbReference type="Rhea" id="RHEA-COMP:13826"/>
        <dbReference type="ChEBI" id="CHEBI:15378"/>
        <dbReference type="ChEBI" id="CHEBI:29969"/>
        <dbReference type="ChEBI" id="CHEBI:57856"/>
        <dbReference type="ChEBI" id="CHEBI:59789"/>
        <dbReference type="ChEBI" id="CHEBI:61961"/>
    </reaction>
</comment>
<comment type="subcellular location">
    <subcellularLocation>
        <location evidence="1">Cytoplasm</location>
    </subcellularLocation>
</comment>
<comment type="similarity">
    <text evidence="1">Belongs to the methyltransferase superfamily. PrmA family.</text>
</comment>
<name>PRMA_CITK8</name>
<sequence length="293" mass="32081">MPWIQLKLNTTGTNAEELSDALVETGAVSVTFQDTHDTPVFEPLPGETRLWGDTDVIGLFDAETDMKEVVAILEHHPLLGAGFAHKIEQLEDKDWEREWMDNFHPMRFGERLWICPSWRDVPDENAVNVMLDPGLAFGTGTHPTTSLCLQWLDGLDLNGKTVIDFGCGSGILAIAALKLGAAKAIGIDIDPQAIQASRDNAERNGVSERLELYLPKDQPEAMKADVVVANILAGPLRELAPLISVLPVESGLLGLSGILASQAESVCEAYTELFTLDPVVEKEEWCRITGRKK</sequence>
<proteinExistence type="inferred from homology"/>
<gene>
    <name evidence="1" type="primary">prmA</name>
    <name type="ordered locus">CKO_04670</name>
</gene>
<dbReference type="EC" id="2.1.1.-" evidence="1"/>
<dbReference type="EMBL" id="CP000822">
    <property type="protein sequence ID" value="ABV15720.1"/>
    <property type="molecule type" value="Genomic_DNA"/>
</dbReference>
<dbReference type="RefSeq" id="WP_012135395.1">
    <property type="nucleotide sequence ID" value="NC_009792.1"/>
</dbReference>
<dbReference type="SMR" id="A8AQF7"/>
<dbReference type="STRING" id="290338.CKO_04670"/>
<dbReference type="GeneID" id="45138197"/>
<dbReference type="KEGG" id="cko:CKO_04670"/>
<dbReference type="HOGENOM" id="CLU_049382_4_1_6"/>
<dbReference type="OrthoDB" id="9785995at2"/>
<dbReference type="Proteomes" id="UP000008148">
    <property type="component" value="Chromosome"/>
</dbReference>
<dbReference type="GO" id="GO:0005829">
    <property type="term" value="C:cytosol"/>
    <property type="evidence" value="ECO:0007669"/>
    <property type="project" value="TreeGrafter"/>
</dbReference>
<dbReference type="GO" id="GO:0016279">
    <property type="term" value="F:protein-lysine N-methyltransferase activity"/>
    <property type="evidence" value="ECO:0007669"/>
    <property type="project" value="TreeGrafter"/>
</dbReference>
<dbReference type="GO" id="GO:0032259">
    <property type="term" value="P:methylation"/>
    <property type="evidence" value="ECO:0007669"/>
    <property type="project" value="UniProtKB-KW"/>
</dbReference>
<dbReference type="CDD" id="cd02440">
    <property type="entry name" value="AdoMet_MTases"/>
    <property type="match status" value="1"/>
</dbReference>
<dbReference type="FunFam" id="3.40.50.150:FF:000021">
    <property type="entry name" value="Ribosomal protein L11 methyltransferase"/>
    <property type="match status" value="1"/>
</dbReference>
<dbReference type="Gene3D" id="3.40.50.150">
    <property type="entry name" value="Vaccinia Virus protein VP39"/>
    <property type="match status" value="1"/>
</dbReference>
<dbReference type="HAMAP" id="MF_00735">
    <property type="entry name" value="Methyltr_PrmA"/>
    <property type="match status" value="1"/>
</dbReference>
<dbReference type="InterPro" id="IPR050078">
    <property type="entry name" value="Ribosomal_L11_MeTrfase_PrmA"/>
</dbReference>
<dbReference type="InterPro" id="IPR004498">
    <property type="entry name" value="Ribosomal_PrmA_MeTrfase"/>
</dbReference>
<dbReference type="InterPro" id="IPR029063">
    <property type="entry name" value="SAM-dependent_MTases_sf"/>
</dbReference>
<dbReference type="NCBIfam" id="TIGR00406">
    <property type="entry name" value="prmA"/>
    <property type="match status" value="1"/>
</dbReference>
<dbReference type="PANTHER" id="PTHR43648">
    <property type="entry name" value="ELECTRON TRANSFER FLAVOPROTEIN BETA SUBUNIT LYSINE METHYLTRANSFERASE"/>
    <property type="match status" value="1"/>
</dbReference>
<dbReference type="PANTHER" id="PTHR43648:SF1">
    <property type="entry name" value="ELECTRON TRANSFER FLAVOPROTEIN BETA SUBUNIT LYSINE METHYLTRANSFERASE"/>
    <property type="match status" value="1"/>
</dbReference>
<dbReference type="Pfam" id="PF06325">
    <property type="entry name" value="PrmA"/>
    <property type="match status" value="1"/>
</dbReference>
<dbReference type="PIRSF" id="PIRSF000401">
    <property type="entry name" value="RPL11_MTase"/>
    <property type="match status" value="1"/>
</dbReference>
<dbReference type="SUPFAM" id="SSF53335">
    <property type="entry name" value="S-adenosyl-L-methionine-dependent methyltransferases"/>
    <property type="match status" value="1"/>
</dbReference>